<feature type="chain" id="PRO_1000062375" description="NADPH-dependent 7-cyano-7-deazaguanine reductase">
    <location>
        <begin position="1"/>
        <end position="122"/>
    </location>
</feature>
<feature type="active site" description="Thioimide intermediate" evidence="1">
    <location>
        <position position="34"/>
    </location>
</feature>
<feature type="active site" description="Proton donor" evidence="1">
    <location>
        <position position="41"/>
    </location>
</feature>
<feature type="binding site" evidence="1">
    <location>
        <begin position="56"/>
        <end position="58"/>
    </location>
    <ligand>
        <name>substrate</name>
    </ligand>
</feature>
<feature type="binding site" evidence="1">
    <location>
        <begin position="75"/>
        <end position="76"/>
    </location>
    <ligand>
        <name>substrate</name>
    </ligand>
</feature>
<organism>
    <name type="scientific">Anaeromyxobacter sp. (strain Fw109-5)</name>
    <dbReference type="NCBI Taxonomy" id="404589"/>
    <lineage>
        <taxon>Bacteria</taxon>
        <taxon>Pseudomonadati</taxon>
        <taxon>Myxococcota</taxon>
        <taxon>Myxococcia</taxon>
        <taxon>Myxococcales</taxon>
        <taxon>Cystobacterineae</taxon>
        <taxon>Anaeromyxobacteraceae</taxon>
        <taxon>Anaeromyxobacter</taxon>
    </lineage>
</organism>
<protein>
    <recommendedName>
        <fullName evidence="1">NADPH-dependent 7-cyano-7-deazaguanine reductase</fullName>
        <ecNumber evidence="1">1.7.1.13</ecNumber>
    </recommendedName>
    <alternativeName>
        <fullName evidence="1">7-cyano-7-carbaguanine reductase</fullName>
    </alternativeName>
    <alternativeName>
        <fullName evidence="1">NADPH-dependent nitrile oxidoreductase</fullName>
    </alternativeName>
    <alternativeName>
        <fullName evidence="1">PreQ(0) reductase</fullName>
    </alternativeName>
</protein>
<dbReference type="EC" id="1.7.1.13" evidence="1"/>
<dbReference type="EMBL" id="CP000769">
    <property type="protein sequence ID" value="ABS24546.1"/>
    <property type="molecule type" value="Genomic_DNA"/>
</dbReference>
<dbReference type="RefSeq" id="WP_011984652.1">
    <property type="nucleotide sequence ID" value="NC_009675.1"/>
</dbReference>
<dbReference type="SMR" id="A7H750"/>
<dbReference type="STRING" id="404589.Anae109_0331"/>
<dbReference type="KEGG" id="afw:Anae109_0331"/>
<dbReference type="eggNOG" id="COG0780">
    <property type="taxonomic scope" value="Bacteria"/>
</dbReference>
<dbReference type="HOGENOM" id="CLU_102489_1_0_7"/>
<dbReference type="OrthoDB" id="9789995at2"/>
<dbReference type="UniPathway" id="UPA00392"/>
<dbReference type="Proteomes" id="UP000006382">
    <property type="component" value="Chromosome"/>
</dbReference>
<dbReference type="GO" id="GO:0005737">
    <property type="term" value="C:cytoplasm"/>
    <property type="evidence" value="ECO:0007669"/>
    <property type="project" value="UniProtKB-SubCell"/>
</dbReference>
<dbReference type="GO" id="GO:0033739">
    <property type="term" value="F:preQ1 synthase activity"/>
    <property type="evidence" value="ECO:0007669"/>
    <property type="project" value="UniProtKB-UniRule"/>
</dbReference>
<dbReference type="GO" id="GO:0008616">
    <property type="term" value="P:queuosine biosynthetic process"/>
    <property type="evidence" value="ECO:0007669"/>
    <property type="project" value="UniProtKB-UniRule"/>
</dbReference>
<dbReference type="GO" id="GO:0006400">
    <property type="term" value="P:tRNA modification"/>
    <property type="evidence" value="ECO:0007669"/>
    <property type="project" value="UniProtKB-UniRule"/>
</dbReference>
<dbReference type="Gene3D" id="3.30.1130.10">
    <property type="match status" value="1"/>
</dbReference>
<dbReference type="HAMAP" id="MF_00818">
    <property type="entry name" value="QueF_type1"/>
    <property type="match status" value="1"/>
</dbReference>
<dbReference type="InterPro" id="IPR043133">
    <property type="entry name" value="GTP-CH-I_C/QueF"/>
</dbReference>
<dbReference type="InterPro" id="IPR050084">
    <property type="entry name" value="NADPH_dep_7-cyano-7-deazaG_red"/>
</dbReference>
<dbReference type="InterPro" id="IPR029500">
    <property type="entry name" value="QueF"/>
</dbReference>
<dbReference type="InterPro" id="IPR016856">
    <property type="entry name" value="QueF_type1"/>
</dbReference>
<dbReference type="NCBIfam" id="TIGR03139">
    <property type="entry name" value="QueF-II"/>
    <property type="match status" value="1"/>
</dbReference>
<dbReference type="PANTHER" id="PTHR34354">
    <property type="entry name" value="NADPH-DEPENDENT 7-CYANO-7-DEAZAGUANINE REDUCTASE"/>
    <property type="match status" value="1"/>
</dbReference>
<dbReference type="PANTHER" id="PTHR34354:SF1">
    <property type="entry name" value="NADPH-DEPENDENT 7-CYANO-7-DEAZAGUANINE REDUCTASE"/>
    <property type="match status" value="1"/>
</dbReference>
<dbReference type="Pfam" id="PF14489">
    <property type="entry name" value="QueF"/>
    <property type="match status" value="1"/>
</dbReference>
<dbReference type="PIRSF" id="PIRSF027377">
    <property type="entry name" value="Nitrile_oxidored_QueF"/>
    <property type="match status" value="1"/>
</dbReference>
<dbReference type="SUPFAM" id="SSF55620">
    <property type="entry name" value="Tetrahydrobiopterin biosynthesis enzymes-like"/>
    <property type="match status" value="1"/>
</dbReference>
<accession>A7H750</accession>
<sequence>MPTKPARDLQTFPNPKPDRPYEIAMECPEFTCVCPVTGQPDFATIRLRYVPAERCVELKSLKLYLWSFRDEGTFHEAVTNRICDDIVQAIAPRWIEVVGDFAVRGGIHTVVTARHGERPAGV</sequence>
<proteinExistence type="inferred from homology"/>
<gene>
    <name evidence="1" type="primary">queF</name>
    <name type="ordered locus">Anae109_0331</name>
</gene>
<name>QUEF_ANADF</name>
<reference key="1">
    <citation type="journal article" date="2015" name="Genome Announc.">
        <title>Complete genome sequence of Anaeromyxobacter sp. Fw109-5, an anaerobic, metal-reducing bacterium isolated from a contaminated subsurface environment.</title>
        <authorList>
            <person name="Hwang C."/>
            <person name="Copeland A."/>
            <person name="Lucas S."/>
            <person name="Lapidus A."/>
            <person name="Barry K."/>
            <person name="Glavina Del Rio T."/>
            <person name="Dalin E."/>
            <person name="Tice H."/>
            <person name="Pitluck S."/>
            <person name="Sims D."/>
            <person name="Brettin T."/>
            <person name="Bruce D.C."/>
            <person name="Detter J.C."/>
            <person name="Han C.S."/>
            <person name="Schmutz J."/>
            <person name="Larimer F.W."/>
            <person name="Land M.L."/>
            <person name="Hauser L.J."/>
            <person name="Kyrpides N."/>
            <person name="Lykidis A."/>
            <person name="Richardson P."/>
            <person name="Belieav A."/>
            <person name="Sanford R.A."/>
            <person name="Loeffler F.E."/>
            <person name="Fields M.W."/>
        </authorList>
    </citation>
    <scope>NUCLEOTIDE SEQUENCE [LARGE SCALE GENOMIC DNA]</scope>
    <source>
        <strain>Fw109-5</strain>
    </source>
</reference>
<keyword id="KW-0963">Cytoplasm</keyword>
<keyword id="KW-0521">NADP</keyword>
<keyword id="KW-0560">Oxidoreductase</keyword>
<keyword id="KW-0671">Queuosine biosynthesis</keyword>
<keyword id="KW-1185">Reference proteome</keyword>
<comment type="function">
    <text evidence="1">Catalyzes the NADPH-dependent reduction of 7-cyano-7-deazaguanine (preQ0) to 7-aminomethyl-7-deazaguanine (preQ1).</text>
</comment>
<comment type="catalytic activity">
    <reaction evidence="1">
        <text>7-aminomethyl-7-carbaguanine + 2 NADP(+) = 7-cyano-7-deazaguanine + 2 NADPH + 3 H(+)</text>
        <dbReference type="Rhea" id="RHEA:13409"/>
        <dbReference type="ChEBI" id="CHEBI:15378"/>
        <dbReference type="ChEBI" id="CHEBI:45075"/>
        <dbReference type="ChEBI" id="CHEBI:57783"/>
        <dbReference type="ChEBI" id="CHEBI:58349"/>
        <dbReference type="ChEBI" id="CHEBI:58703"/>
        <dbReference type="EC" id="1.7.1.13"/>
    </reaction>
</comment>
<comment type="pathway">
    <text evidence="1">tRNA modification; tRNA-queuosine biosynthesis.</text>
</comment>
<comment type="subcellular location">
    <subcellularLocation>
        <location evidence="1">Cytoplasm</location>
    </subcellularLocation>
</comment>
<comment type="similarity">
    <text evidence="1">Belongs to the GTP cyclohydrolase I family. QueF type 1 subfamily.</text>
</comment>
<evidence type="ECO:0000255" key="1">
    <source>
        <dbReference type="HAMAP-Rule" id="MF_00818"/>
    </source>
</evidence>